<gene>
    <name evidence="1" type="primary">ulaF</name>
    <name type="ordered locus">ECIAI39_4663</name>
</gene>
<organism>
    <name type="scientific">Escherichia coli O7:K1 (strain IAI39 / ExPEC)</name>
    <dbReference type="NCBI Taxonomy" id="585057"/>
    <lineage>
        <taxon>Bacteria</taxon>
        <taxon>Pseudomonadati</taxon>
        <taxon>Pseudomonadota</taxon>
        <taxon>Gammaproteobacteria</taxon>
        <taxon>Enterobacterales</taxon>
        <taxon>Enterobacteriaceae</taxon>
        <taxon>Escherichia</taxon>
    </lineage>
</organism>
<proteinExistence type="inferred from homology"/>
<comment type="function">
    <text evidence="1">Catalyzes the isomerization of L-ribulose 5-phosphate to D-xylulose 5-phosphate. Is involved in the anaerobic L-ascorbate utilization.</text>
</comment>
<comment type="catalytic activity">
    <reaction evidence="1">
        <text>L-ribulose 5-phosphate = D-xylulose 5-phosphate</text>
        <dbReference type="Rhea" id="RHEA:22368"/>
        <dbReference type="ChEBI" id="CHEBI:57737"/>
        <dbReference type="ChEBI" id="CHEBI:58226"/>
        <dbReference type="EC" id="5.1.3.4"/>
    </reaction>
</comment>
<comment type="cofactor">
    <cofactor evidence="1">
        <name>Zn(2+)</name>
        <dbReference type="ChEBI" id="CHEBI:29105"/>
    </cofactor>
    <text evidence="1">Binds 1 zinc ion per subunit.</text>
</comment>
<comment type="pathway">
    <text evidence="1">Cofactor degradation; L-ascorbate degradation; D-xylulose 5-phosphate from L-ascorbate: step 4/4.</text>
</comment>
<comment type="induction">
    <text evidence="1">Induced by L-ascorbate. Repressed by UlaR.</text>
</comment>
<comment type="similarity">
    <text evidence="1">Belongs to the aldolase class II family. AraD/FucA subfamily.</text>
</comment>
<name>ULAF_ECO7I</name>
<dbReference type="EC" id="5.1.3.4" evidence="1"/>
<dbReference type="EMBL" id="CU928164">
    <property type="protein sequence ID" value="CAR20761.1"/>
    <property type="molecule type" value="Genomic_DNA"/>
</dbReference>
<dbReference type="RefSeq" id="WP_001170785.1">
    <property type="nucleotide sequence ID" value="NC_011750.1"/>
</dbReference>
<dbReference type="RefSeq" id="YP_002410524.1">
    <property type="nucleotide sequence ID" value="NC_011750.1"/>
</dbReference>
<dbReference type="SMR" id="B7NTQ4"/>
<dbReference type="STRING" id="585057.ECIAI39_4663"/>
<dbReference type="KEGG" id="ect:ECIAI39_4663"/>
<dbReference type="PATRIC" id="fig|585057.6.peg.4810"/>
<dbReference type="HOGENOM" id="CLU_006033_5_0_6"/>
<dbReference type="UniPathway" id="UPA00263">
    <property type="reaction ID" value="UER00380"/>
</dbReference>
<dbReference type="Proteomes" id="UP000000749">
    <property type="component" value="Chromosome"/>
</dbReference>
<dbReference type="GO" id="GO:0005829">
    <property type="term" value="C:cytosol"/>
    <property type="evidence" value="ECO:0007669"/>
    <property type="project" value="TreeGrafter"/>
</dbReference>
<dbReference type="GO" id="GO:0016832">
    <property type="term" value="F:aldehyde-lyase activity"/>
    <property type="evidence" value="ECO:0007669"/>
    <property type="project" value="TreeGrafter"/>
</dbReference>
<dbReference type="GO" id="GO:0008742">
    <property type="term" value="F:L-ribulose-phosphate 4-epimerase activity"/>
    <property type="evidence" value="ECO:0007669"/>
    <property type="project" value="UniProtKB-UniRule"/>
</dbReference>
<dbReference type="GO" id="GO:0008270">
    <property type="term" value="F:zinc ion binding"/>
    <property type="evidence" value="ECO:0007669"/>
    <property type="project" value="UniProtKB-UniRule"/>
</dbReference>
<dbReference type="GO" id="GO:0019854">
    <property type="term" value="P:L-ascorbic acid catabolic process"/>
    <property type="evidence" value="ECO:0007669"/>
    <property type="project" value="UniProtKB-UniRule"/>
</dbReference>
<dbReference type="GO" id="GO:0019323">
    <property type="term" value="P:pentose catabolic process"/>
    <property type="evidence" value="ECO:0007669"/>
    <property type="project" value="TreeGrafter"/>
</dbReference>
<dbReference type="CDD" id="cd00398">
    <property type="entry name" value="Aldolase_II"/>
    <property type="match status" value="1"/>
</dbReference>
<dbReference type="FunFam" id="3.40.225.10:FF:000001">
    <property type="entry name" value="L-ribulose-5-phosphate 4-epimerase UlaF"/>
    <property type="match status" value="1"/>
</dbReference>
<dbReference type="Gene3D" id="3.40.225.10">
    <property type="entry name" value="Class II aldolase/adducin N-terminal domain"/>
    <property type="match status" value="1"/>
</dbReference>
<dbReference type="HAMAP" id="MF_01952">
    <property type="entry name" value="UlaF"/>
    <property type="match status" value="1"/>
</dbReference>
<dbReference type="InterPro" id="IPR050197">
    <property type="entry name" value="Aldolase_class_II_sugar_metab"/>
</dbReference>
<dbReference type="InterPro" id="IPR001303">
    <property type="entry name" value="Aldolase_II/adducin_N"/>
</dbReference>
<dbReference type="InterPro" id="IPR036409">
    <property type="entry name" value="Aldolase_II/adducin_N_sf"/>
</dbReference>
<dbReference type="InterPro" id="IPR023499">
    <property type="entry name" value="UlaF"/>
</dbReference>
<dbReference type="NCBIfam" id="NF006047">
    <property type="entry name" value="PRK08193.1"/>
    <property type="match status" value="1"/>
</dbReference>
<dbReference type="NCBIfam" id="NF009003">
    <property type="entry name" value="PRK12348.1"/>
    <property type="match status" value="1"/>
</dbReference>
<dbReference type="PANTHER" id="PTHR22789">
    <property type="entry name" value="FUCULOSE PHOSPHATE ALDOLASE"/>
    <property type="match status" value="1"/>
</dbReference>
<dbReference type="PANTHER" id="PTHR22789:SF9">
    <property type="entry name" value="L-RIBULOSE-5-PHOSPHATE 4-EPIMERASE ULAF"/>
    <property type="match status" value="1"/>
</dbReference>
<dbReference type="Pfam" id="PF00596">
    <property type="entry name" value="Aldolase_II"/>
    <property type="match status" value="1"/>
</dbReference>
<dbReference type="SMART" id="SM01007">
    <property type="entry name" value="Aldolase_II"/>
    <property type="match status" value="1"/>
</dbReference>
<dbReference type="SUPFAM" id="SSF53639">
    <property type="entry name" value="AraD/HMP-PK domain-like"/>
    <property type="match status" value="1"/>
</dbReference>
<reference key="1">
    <citation type="journal article" date="2009" name="PLoS Genet.">
        <title>Organised genome dynamics in the Escherichia coli species results in highly diverse adaptive paths.</title>
        <authorList>
            <person name="Touchon M."/>
            <person name="Hoede C."/>
            <person name="Tenaillon O."/>
            <person name="Barbe V."/>
            <person name="Baeriswyl S."/>
            <person name="Bidet P."/>
            <person name="Bingen E."/>
            <person name="Bonacorsi S."/>
            <person name="Bouchier C."/>
            <person name="Bouvet O."/>
            <person name="Calteau A."/>
            <person name="Chiapello H."/>
            <person name="Clermont O."/>
            <person name="Cruveiller S."/>
            <person name="Danchin A."/>
            <person name="Diard M."/>
            <person name="Dossat C."/>
            <person name="Karoui M.E."/>
            <person name="Frapy E."/>
            <person name="Garry L."/>
            <person name="Ghigo J.M."/>
            <person name="Gilles A.M."/>
            <person name="Johnson J."/>
            <person name="Le Bouguenec C."/>
            <person name="Lescat M."/>
            <person name="Mangenot S."/>
            <person name="Martinez-Jehanne V."/>
            <person name="Matic I."/>
            <person name="Nassif X."/>
            <person name="Oztas S."/>
            <person name="Petit M.A."/>
            <person name="Pichon C."/>
            <person name="Rouy Z."/>
            <person name="Ruf C.S."/>
            <person name="Schneider D."/>
            <person name="Tourret J."/>
            <person name="Vacherie B."/>
            <person name="Vallenet D."/>
            <person name="Medigue C."/>
            <person name="Rocha E.P.C."/>
            <person name="Denamur E."/>
        </authorList>
    </citation>
    <scope>NUCLEOTIDE SEQUENCE [LARGE SCALE GENOMIC DNA]</scope>
    <source>
        <strain>IAI39 / ExPEC</strain>
    </source>
</reference>
<keyword id="KW-0119">Carbohydrate metabolism</keyword>
<keyword id="KW-0413">Isomerase</keyword>
<keyword id="KW-0479">Metal-binding</keyword>
<keyword id="KW-0862">Zinc</keyword>
<sequence length="228" mass="25310">MQKLKQQVFEANMDLPRYGLVTFTWGNVSAIDRERGLVVIKPSGIAYESMKAADMVVVDMSGKVVEGEYRPSSDTATHLELYRRYPSLGGIVHTHSTHATAWAQAGLAIPALGTTHADYFFGDIPCTRGLSEEEVQGEYELNTGKVIIETLGNAEPLHTPGIVVYQHGPFAWGKDAHDAVHNAVVMEEVAKMAWIARSINPQLNHIDSYLMNKHFMRKHGPNAYYGQK</sequence>
<feature type="chain" id="PRO_1000188843" description="L-ribulose-5-phosphate 4-epimerase UlaF">
    <location>
        <begin position="1"/>
        <end position="228"/>
    </location>
</feature>
<feature type="active site" description="Proton donor/acceptor" evidence="1">
    <location>
        <position position="118"/>
    </location>
</feature>
<feature type="active site" description="Proton donor/acceptor" evidence="1">
    <location>
        <position position="225"/>
    </location>
</feature>
<feature type="binding site" evidence="1">
    <location>
        <begin position="26"/>
        <end position="27"/>
    </location>
    <ligand>
        <name>substrate</name>
    </ligand>
</feature>
<feature type="binding site" evidence="1">
    <location>
        <begin position="43"/>
        <end position="44"/>
    </location>
    <ligand>
        <name>substrate</name>
    </ligand>
</feature>
<feature type="binding site" evidence="1">
    <location>
        <begin position="72"/>
        <end position="73"/>
    </location>
    <ligand>
        <name>substrate</name>
    </ligand>
</feature>
<feature type="binding site" evidence="1">
    <location>
        <position position="74"/>
    </location>
    <ligand>
        <name>Zn(2+)</name>
        <dbReference type="ChEBI" id="CHEBI:29105"/>
    </ligand>
</feature>
<feature type="binding site" evidence="1">
    <location>
        <position position="93"/>
    </location>
    <ligand>
        <name>Zn(2+)</name>
        <dbReference type="ChEBI" id="CHEBI:29105"/>
    </ligand>
</feature>
<feature type="binding site" evidence="1">
    <location>
        <position position="95"/>
    </location>
    <ligand>
        <name>Zn(2+)</name>
        <dbReference type="ChEBI" id="CHEBI:29105"/>
    </ligand>
</feature>
<feature type="binding site" evidence="1">
    <location>
        <position position="167"/>
    </location>
    <ligand>
        <name>Zn(2+)</name>
        <dbReference type="ChEBI" id="CHEBI:29105"/>
    </ligand>
</feature>
<accession>B7NTQ4</accession>
<evidence type="ECO:0000255" key="1">
    <source>
        <dbReference type="HAMAP-Rule" id="MF_01952"/>
    </source>
</evidence>
<protein>
    <recommendedName>
        <fullName evidence="1">L-ribulose-5-phosphate 4-epimerase UlaF</fullName>
        <ecNumber evidence="1">5.1.3.4</ecNumber>
    </recommendedName>
    <alternativeName>
        <fullName evidence="1">L-ascorbate utilization protein F</fullName>
    </alternativeName>
    <alternativeName>
        <fullName evidence="1">Phosphoribulose isomerase</fullName>
    </alternativeName>
</protein>